<evidence type="ECO:0000250" key="1"/>
<evidence type="ECO:0000250" key="2">
    <source>
        <dbReference type="UniProtKB" id="P12454"/>
    </source>
</evidence>
<evidence type="ECO:0000250" key="3">
    <source>
        <dbReference type="UniProtKB" id="P18099"/>
    </source>
</evidence>
<evidence type="ECO:0000250" key="4">
    <source>
        <dbReference type="UniProtKB" id="P19508"/>
    </source>
</evidence>
<evidence type="ECO:0000305" key="5"/>
<proteinExistence type="inferred from homology"/>
<name>VPX_HV2KR</name>
<organism>
    <name type="scientific">Human immunodeficiency virus type 2 subtype A (isolate KR)</name>
    <name type="common">HIV-2</name>
    <dbReference type="NCBI Taxonomy" id="73484"/>
    <lineage>
        <taxon>Viruses</taxon>
        <taxon>Riboviria</taxon>
        <taxon>Pararnavirae</taxon>
        <taxon>Artverviricota</taxon>
        <taxon>Revtraviricetes</taxon>
        <taxon>Ortervirales</taxon>
        <taxon>Retroviridae</taxon>
        <taxon>Orthoretrovirinae</taxon>
        <taxon>Lentivirus</taxon>
        <taxon>Human immunodeficiency virus 2</taxon>
    </lineage>
</organism>
<dbReference type="EMBL" id="U22047">
    <property type="protein sequence ID" value="AAA64578.1"/>
    <property type="molecule type" value="Genomic_DNA"/>
</dbReference>
<dbReference type="SMR" id="Q74122"/>
<dbReference type="Proteomes" id="UP000007425">
    <property type="component" value="Segment"/>
</dbReference>
<dbReference type="GO" id="GO:0042025">
    <property type="term" value="C:host cell nucleus"/>
    <property type="evidence" value="ECO:0007669"/>
    <property type="project" value="UniProtKB-SubCell"/>
</dbReference>
<dbReference type="GO" id="GO:0044423">
    <property type="term" value="C:virion component"/>
    <property type="evidence" value="ECO:0007669"/>
    <property type="project" value="UniProtKB-KW"/>
</dbReference>
<dbReference type="GO" id="GO:0052170">
    <property type="term" value="P:symbiont-mediated suppression of host innate immune response"/>
    <property type="evidence" value="ECO:0007669"/>
    <property type="project" value="UniProtKB-KW"/>
</dbReference>
<dbReference type="GO" id="GO:0019058">
    <property type="term" value="P:viral life cycle"/>
    <property type="evidence" value="ECO:0007669"/>
    <property type="project" value="InterPro"/>
</dbReference>
<dbReference type="Gene3D" id="1.20.5.4730">
    <property type="match status" value="1"/>
</dbReference>
<dbReference type="InterPro" id="IPR053711">
    <property type="entry name" value="Lentiviral_Vpx_assoc_factor"/>
</dbReference>
<dbReference type="InterPro" id="IPR000012">
    <property type="entry name" value="RetroV_VpR/X"/>
</dbReference>
<dbReference type="Pfam" id="PF00522">
    <property type="entry name" value="VPR"/>
    <property type="match status" value="1"/>
</dbReference>
<keyword id="KW-0014">AIDS</keyword>
<keyword id="KW-1048">Host nucleus</keyword>
<keyword id="KW-0945">Host-virus interaction</keyword>
<keyword id="KW-1090">Inhibition of host innate immune response by virus</keyword>
<keyword id="KW-0899">Viral immunoevasion</keyword>
<keyword id="KW-0946">Virion</keyword>
<protein>
    <recommendedName>
        <fullName>Protein Vpx</fullName>
    </recommendedName>
    <alternativeName>
        <fullName>Viral protein X</fullName>
    </alternativeName>
    <alternativeName>
        <fullName>X ORF protein</fullName>
    </alternativeName>
</protein>
<organismHost>
    <name type="scientific">Homo sapiens</name>
    <name type="common">Human</name>
    <dbReference type="NCBI Taxonomy" id="9606"/>
</organismHost>
<sequence>MADPRKTVPPGNGGEVTIGEAFAWLERMVEAINREAVNHLPRELIFQVWQRSWRYWHDDLGMSQSYTKYRYLRLMQYAMFIHVKKGCTCLGGGHGPGGWRPGPPPPPPGLV</sequence>
<gene>
    <name type="primary">vpx</name>
</gene>
<reference key="1">
    <citation type="submission" date="1995-04" db="EMBL/GenBank/DDBJ databases">
        <authorList>
            <person name="Kraus G.K."/>
            <person name="Talbott R."/>
            <person name="Leavitt M."/>
            <person name="Luznick L."/>
            <person name="Schmidt A."/>
            <person name="Badel P."/>
            <person name="Bartz C."/>
            <person name="Morton W."/>
            <person name="Wong-Staal F."/>
            <person name="Looney D.J."/>
        </authorList>
    </citation>
    <scope>NUCLEOTIDE SEQUENCE [GENOMIC DNA]</scope>
</reference>
<comment type="function">
    <text evidence="1">Plays a role in nuclear translocation of the viral pre-integration complex (PIC), thus is required for the virus to infect non-dividing cells. Targets specific host proteins for degradation by the 26S proteasome. Acts by associating with the cellular CUL4A-DDB1 E3 ligase complex through direct interaction with host VPRPB/DCAF-1. This change in the E3 ligase substrate specificity results in the degradation of host SAMHD1. In turn, SAMHD1 depletion allows viral replication in host myeloid cells by preventing SAMHD1-mediated hydrolysis of intracellular dNTPs necessary for reverse transcription (By similarity).</text>
</comment>
<comment type="subunit">
    <text evidence="1 2 3">Interacts with the P6 region of unprocessed GAG (By similarity). Interacts with host VPRBP/DCAF1, leading to change substrate specificity of the CUL4A-DDB1 E3 ligase complex (By similarity). Interacts with host NUP153 (By similarity).</text>
</comment>
<comment type="subcellular location">
    <subcellularLocation>
        <location>Virion</location>
    </subcellularLocation>
    <subcellularLocation>
        <location>Host nucleus</location>
    </subcellularLocation>
    <text evidence="1">Nuclear just after virion uncoating, or if expressed in the absence of unprocessed GAG.</text>
</comment>
<comment type="similarity">
    <text evidence="5">Belongs to the lentivirus VPX protein family.</text>
</comment>
<feature type="chain" id="PRO_0000085394" description="Protein Vpx">
    <location>
        <begin position="1"/>
        <end position="111"/>
    </location>
</feature>
<feature type="region of interest" description="Binds to human NUP153" evidence="4">
    <location>
        <begin position="61"/>
        <end position="80"/>
    </location>
</feature>
<feature type="short sequence motif" description="Nuclear localization signal" evidence="1">
    <location>
        <begin position="65"/>
        <end position="72"/>
    </location>
</feature>
<accession>Q74122</accession>